<evidence type="ECO:0000250" key="1">
    <source>
        <dbReference type="UniProtKB" id="P29033"/>
    </source>
</evidence>
<evidence type="ECO:0000250" key="2">
    <source>
        <dbReference type="UniProtKB" id="Q00977"/>
    </source>
</evidence>
<evidence type="ECO:0000305" key="3"/>
<dbReference type="EMBL" id="AY046582">
    <property type="protein sequence ID" value="AAL03974.1"/>
    <property type="molecule type" value="Genomic_DNA"/>
</dbReference>
<dbReference type="RefSeq" id="XP_054303212.1">
    <property type="nucleotide sequence ID" value="XM_054447237.2"/>
</dbReference>
<dbReference type="SMR" id="Q8MIT9"/>
<dbReference type="GeneID" id="129011879"/>
<dbReference type="GO" id="GO:0005922">
    <property type="term" value="C:connexin complex"/>
    <property type="evidence" value="ECO:0000250"/>
    <property type="project" value="UniProtKB"/>
</dbReference>
<dbReference type="GO" id="GO:0005886">
    <property type="term" value="C:plasma membrane"/>
    <property type="evidence" value="ECO:0000250"/>
    <property type="project" value="UniProtKB"/>
</dbReference>
<dbReference type="GO" id="GO:0005509">
    <property type="term" value="F:calcium ion binding"/>
    <property type="evidence" value="ECO:0000250"/>
    <property type="project" value="UniProtKB"/>
</dbReference>
<dbReference type="GO" id="GO:0005243">
    <property type="term" value="F:gap junction channel activity"/>
    <property type="evidence" value="ECO:0000250"/>
    <property type="project" value="UniProtKB"/>
</dbReference>
<dbReference type="GO" id="GO:0007267">
    <property type="term" value="P:cell-cell signaling"/>
    <property type="evidence" value="ECO:0000250"/>
    <property type="project" value="UniProtKB"/>
</dbReference>
<dbReference type="GO" id="GO:1990349">
    <property type="term" value="P:gap junction-mediated intercellular transport"/>
    <property type="evidence" value="ECO:0000250"/>
    <property type="project" value="UniProtKB"/>
</dbReference>
<dbReference type="GO" id="GO:0007605">
    <property type="term" value="P:sensory perception of sound"/>
    <property type="evidence" value="ECO:0007669"/>
    <property type="project" value="UniProtKB-KW"/>
</dbReference>
<dbReference type="FunFam" id="1.20.1440.80:FF:000001">
    <property type="entry name" value="Gap junction alpha-1"/>
    <property type="match status" value="1"/>
</dbReference>
<dbReference type="Gene3D" id="1.20.1440.80">
    <property type="entry name" value="Gap junction channel protein cysteine-rich domain"/>
    <property type="match status" value="1"/>
</dbReference>
<dbReference type="InterPro" id="IPR000500">
    <property type="entry name" value="Connexin"/>
</dbReference>
<dbReference type="InterPro" id="IPR002268">
    <property type="entry name" value="Connexin26"/>
</dbReference>
<dbReference type="InterPro" id="IPR019570">
    <property type="entry name" value="Connexin_CCC"/>
</dbReference>
<dbReference type="InterPro" id="IPR017990">
    <property type="entry name" value="Connexin_CS"/>
</dbReference>
<dbReference type="InterPro" id="IPR013092">
    <property type="entry name" value="Connexin_N"/>
</dbReference>
<dbReference type="InterPro" id="IPR038359">
    <property type="entry name" value="Connexin_N_sf"/>
</dbReference>
<dbReference type="PANTHER" id="PTHR11984">
    <property type="entry name" value="CONNEXIN"/>
    <property type="match status" value="1"/>
</dbReference>
<dbReference type="PANTHER" id="PTHR11984:SF46">
    <property type="entry name" value="GAP JUNCTION BETA-2 PROTEIN"/>
    <property type="match status" value="1"/>
</dbReference>
<dbReference type="Pfam" id="PF00029">
    <property type="entry name" value="Connexin"/>
    <property type="match status" value="1"/>
</dbReference>
<dbReference type="PRINTS" id="PR00206">
    <property type="entry name" value="CONNEXIN"/>
</dbReference>
<dbReference type="PRINTS" id="PR01139">
    <property type="entry name" value="CONNEXINB2"/>
</dbReference>
<dbReference type="SMART" id="SM00037">
    <property type="entry name" value="CNX"/>
    <property type="match status" value="1"/>
</dbReference>
<dbReference type="SMART" id="SM01089">
    <property type="entry name" value="Connexin_CCC"/>
    <property type="match status" value="1"/>
</dbReference>
<dbReference type="PROSITE" id="PS00407">
    <property type="entry name" value="CONNEXINS_1"/>
    <property type="match status" value="1"/>
</dbReference>
<dbReference type="PROSITE" id="PS00408">
    <property type="entry name" value="CONNEXINS_2"/>
    <property type="match status" value="1"/>
</dbReference>
<name>CXB2_PONPY</name>
<comment type="function">
    <text evidence="1">Structural component of gap junctions. Gap junctions are dodecameric channels that connect the cytoplasm of adjoining cells. They are formed by the docking of two hexameric hemichannels, one from each cell membrane. Small molecules and ions diffuse from one cell to a neighboring cell via the central pore.</text>
</comment>
<comment type="subunit">
    <text evidence="1 2">A hemichannel or connexon is composed of a hexamer of connexins. A functional gap junction is formed by the apposition of two hemichannels (By similarity). Forms heteromeric channels with GJB4. Interacts with CNST (By similarity).</text>
</comment>
<comment type="subcellular location">
    <subcellularLocation>
        <location evidence="2">Cell membrane</location>
        <topology evidence="1">Multi-pass membrane protein</topology>
    </subcellularLocation>
    <subcellularLocation>
        <location evidence="2">Cell junction</location>
        <location evidence="2">Gap junction</location>
    </subcellularLocation>
    <text evidence="2">Colocalizes with GJB4 at gap junction plaques in the cochlea.</text>
</comment>
<comment type="similarity">
    <text evidence="3">Belongs to the connexin family. Beta-type (group I) subfamily.</text>
</comment>
<gene>
    <name type="primary">GJB2</name>
</gene>
<proteinExistence type="inferred from homology"/>
<reference key="1">
    <citation type="submission" date="2001-07" db="EMBL/GenBank/DDBJ databases">
        <title>Sequence comparison of primate connexin 26 (GJB2) genes.</title>
        <authorList>
            <person name="Orten D.J."/>
            <person name="Bizzarri-Kriener C."/>
            <person name="Askew J.W."/>
            <person name="Li J.-L."/>
            <person name="Louis E."/>
            <person name="Kelley P.M."/>
            <person name="Kimberling W.J."/>
        </authorList>
    </citation>
    <scope>NUCLEOTIDE SEQUENCE [GENOMIC DNA]</scope>
</reference>
<organism>
    <name type="scientific">Pongo pygmaeus</name>
    <name type="common">Bornean orangutan</name>
    <dbReference type="NCBI Taxonomy" id="9600"/>
    <lineage>
        <taxon>Eukaryota</taxon>
        <taxon>Metazoa</taxon>
        <taxon>Chordata</taxon>
        <taxon>Craniata</taxon>
        <taxon>Vertebrata</taxon>
        <taxon>Euteleostomi</taxon>
        <taxon>Mammalia</taxon>
        <taxon>Eutheria</taxon>
        <taxon>Euarchontoglires</taxon>
        <taxon>Primates</taxon>
        <taxon>Haplorrhini</taxon>
        <taxon>Catarrhini</taxon>
        <taxon>Hominidae</taxon>
        <taxon>Pongo</taxon>
    </lineage>
</organism>
<sequence>MDWGALQTILGGVNKHSTSIGKIWLTVLFIFRIMILVVAAKEVWGDEQADFVCNTLQPGCKNVCYDHYFPISHIRLWALQLIFVSTPALLVAMHVAYRRHEKKRKFIKGEIKSEFKDIEEIKTQKVRIEGSLWWTYTSSIFFRVIFEAAFMYVFYVMYDGFSMQRLVKCNAWPCPNTVDCFVSRPTEKTVFTVFMIAVSGICILLNVTELCYLLIRYCSGRSKKPV</sequence>
<feature type="chain" id="PRO_0000057859" description="Gap junction beta-2 protein">
    <location>
        <begin position="1"/>
        <end position="226"/>
    </location>
</feature>
<feature type="intramembrane region" evidence="1">
    <location>
        <begin position="2"/>
        <end position="13"/>
    </location>
</feature>
<feature type="topological domain" description="Cytoplasmic" evidence="3">
    <location>
        <begin position="14"/>
        <end position="20"/>
    </location>
</feature>
<feature type="transmembrane region" description="Helical" evidence="1">
    <location>
        <begin position="21"/>
        <end position="40"/>
    </location>
</feature>
<feature type="topological domain" description="Extracellular" evidence="3">
    <location>
        <begin position="41"/>
        <end position="73"/>
    </location>
</feature>
<feature type="transmembrane region" description="Helical" evidence="1">
    <location>
        <begin position="74"/>
        <end position="94"/>
    </location>
</feature>
<feature type="topological domain" description="Cytoplasmic" evidence="3">
    <location>
        <begin position="95"/>
        <end position="135"/>
    </location>
</feature>
<feature type="transmembrane region" description="Helical" evidence="1">
    <location>
        <begin position="136"/>
        <end position="156"/>
    </location>
</feature>
<feature type="topological domain" description="Extracellular" evidence="3">
    <location>
        <begin position="157"/>
        <end position="189"/>
    </location>
</feature>
<feature type="transmembrane region" description="Helical" evidence="1">
    <location>
        <begin position="190"/>
        <end position="210"/>
    </location>
</feature>
<feature type="topological domain" description="Cytoplasmic" evidence="3">
    <location>
        <begin position="211"/>
        <end position="226"/>
    </location>
</feature>
<feature type="binding site" description="in other chain" evidence="1">
    <location>
        <position position="42"/>
    </location>
    <ligand>
        <name>Ca(2+)</name>
        <dbReference type="ChEBI" id="CHEBI:29108"/>
        <note>ligand shared between two neighboring subunits</note>
    </ligand>
</feature>
<feature type="binding site" evidence="1">
    <location>
        <position position="45"/>
    </location>
    <ligand>
        <name>Ca(2+)</name>
        <dbReference type="ChEBI" id="CHEBI:29108"/>
        <note>ligand shared between two neighboring subunits</note>
    </ligand>
</feature>
<feature type="binding site" evidence="1">
    <location>
        <position position="47"/>
    </location>
    <ligand>
        <name>Ca(2+)</name>
        <dbReference type="ChEBI" id="CHEBI:29108"/>
        <note>ligand shared between two neighboring subunits</note>
    </ligand>
</feature>
<feature type="disulfide bond" evidence="1">
    <location>
        <begin position="53"/>
        <end position="180"/>
    </location>
</feature>
<feature type="disulfide bond" evidence="1">
    <location>
        <begin position="60"/>
        <end position="174"/>
    </location>
</feature>
<feature type="disulfide bond" evidence="1">
    <location>
        <begin position="64"/>
        <end position="169"/>
    </location>
</feature>
<accession>Q8MIT9</accession>
<keyword id="KW-0106">Calcium</keyword>
<keyword id="KW-0965">Cell junction</keyword>
<keyword id="KW-1003">Cell membrane</keyword>
<keyword id="KW-1015">Disulfide bond</keyword>
<keyword id="KW-0303">Gap junction</keyword>
<keyword id="KW-1009">Hearing</keyword>
<keyword id="KW-0472">Membrane</keyword>
<keyword id="KW-0479">Metal-binding</keyword>
<keyword id="KW-0812">Transmembrane</keyword>
<keyword id="KW-1133">Transmembrane helix</keyword>
<protein>
    <recommendedName>
        <fullName>Gap junction beta-2 protein</fullName>
    </recommendedName>
    <alternativeName>
        <fullName>Connexin-26</fullName>
        <shortName>Cx26</shortName>
    </alternativeName>
</protein>